<sequence length="335" mass="38495">MQFERISTEQKKLSLIQTFLHQNALKLDEQIEYFVVGYNDNEQIVVCGGLAGNIIKCVAIDESLRGSGVALQLITELVDLAYTLKRPHLFIYTKPEYATLFKSCGFYIISDANPYVVLLENSATRLQKQCSLWEKMRVDGNRIGSIVMNANPFTLGHRYLIEQALQQCDHLHLFIVGEDASQFSYTERFEMIQQGIFDLSNITLHSGSDYIISRATFPNYFLKDQLITDESYFEIDLKLFRLHIAQALGITHRFVGTELNCPVTAEYNRQMHYWLMDAEMNAPKINVIEIPRKTASNHIISASTVRKHLAEKNWAQLAEFVPMTTLNYLQKCGRF</sequence>
<keyword id="KW-0067">ATP-binding</keyword>
<keyword id="KW-0436">Ligase</keyword>
<keyword id="KW-0547">Nucleotide-binding</keyword>
<keyword id="KW-1185">Reference proteome</keyword>
<reference key="1">
    <citation type="journal article" date="1995" name="Science">
        <title>Whole-genome random sequencing and assembly of Haemophilus influenzae Rd.</title>
        <authorList>
            <person name="Fleischmann R.D."/>
            <person name="Adams M.D."/>
            <person name="White O."/>
            <person name="Clayton R.A."/>
            <person name="Kirkness E.F."/>
            <person name="Kerlavage A.R."/>
            <person name="Bult C.J."/>
            <person name="Tomb J.-F."/>
            <person name="Dougherty B.A."/>
            <person name="Merrick J.M."/>
            <person name="McKenney K."/>
            <person name="Sutton G.G."/>
            <person name="FitzHugh W."/>
            <person name="Fields C.A."/>
            <person name="Gocayne J.D."/>
            <person name="Scott J.D."/>
            <person name="Shirley R."/>
            <person name="Liu L.-I."/>
            <person name="Glodek A."/>
            <person name="Kelley J.M."/>
            <person name="Weidman J.F."/>
            <person name="Phillips C.A."/>
            <person name="Spriggs T."/>
            <person name="Hedblom E."/>
            <person name="Cotton M.D."/>
            <person name="Utterback T.R."/>
            <person name="Hanna M.C."/>
            <person name="Nguyen D.T."/>
            <person name="Saudek D.M."/>
            <person name="Brandon R.C."/>
            <person name="Fine L.D."/>
            <person name="Fritchman J.L."/>
            <person name="Fuhrmann J.L."/>
            <person name="Geoghagen N.S.M."/>
            <person name="Gnehm C.L."/>
            <person name="McDonald L.A."/>
            <person name="Small K.V."/>
            <person name="Fraser C.M."/>
            <person name="Smith H.O."/>
            <person name="Venter J.C."/>
        </authorList>
    </citation>
    <scope>NUCLEOTIDE SEQUENCE [LARGE SCALE GENOMIC DNA]</scope>
    <source>
        <strain>ATCC 51907 / DSM 11121 / KW20 / Rd</strain>
    </source>
</reference>
<comment type="function">
    <text>Acetylation of prosthetic group (2-(5''-phosphoribosyl)-3'-dephosphocoenzyme-A) of the gamma subunit of citrate lyase.</text>
</comment>
<comment type="catalytic activity">
    <reaction>
        <text>holo-[citrate lyase ACP] + acetate + ATP = acetyl-[citrate lyase ACP] + AMP + diphosphate</text>
        <dbReference type="Rhea" id="RHEA:23788"/>
        <dbReference type="Rhea" id="RHEA-COMP:10158"/>
        <dbReference type="Rhea" id="RHEA-COMP:13710"/>
        <dbReference type="ChEBI" id="CHEBI:30089"/>
        <dbReference type="ChEBI" id="CHEBI:30616"/>
        <dbReference type="ChEBI" id="CHEBI:33019"/>
        <dbReference type="ChEBI" id="CHEBI:82683"/>
        <dbReference type="ChEBI" id="CHEBI:137976"/>
        <dbReference type="ChEBI" id="CHEBI:456215"/>
        <dbReference type="EC" id="6.2.1.22"/>
    </reaction>
</comment>
<accession>P44462</accession>
<protein>
    <recommendedName>
        <fullName>[Citrate [pro-3S]-lyase] ligase</fullName>
        <ecNumber>6.2.1.22</ecNumber>
    </recommendedName>
    <alternativeName>
        <fullName>Acetate:SH-citrate lyase ligase</fullName>
    </alternativeName>
    <alternativeName>
        <fullName>Citrate lyase synthetase</fullName>
    </alternativeName>
</protein>
<name>CITC_HAEIN</name>
<evidence type="ECO:0000255" key="1">
    <source>
        <dbReference type="PROSITE-ProRule" id="PRU00532"/>
    </source>
</evidence>
<feature type="chain" id="PRO_0000089771" description="[Citrate [pro-3S]-lyase] ligase">
    <location>
        <begin position="1"/>
        <end position="335"/>
    </location>
</feature>
<feature type="domain" description="N-acetyltransferase" evidence="1">
    <location>
        <begin position="1"/>
        <end position="131"/>
    </location>
</feature>
<proteinExistence type="predicted"/>
<gene>
    <name type="primary">citC</name>
    <name type="ordered locus">HI_0025</name>
</gene>
<organism>
    <name type="scientific">Haemophilus influenzae (strain ATCC 51907 / DSM 11121 / KW20 / Rd)</name>
    <dbReference type="NCBI Taxonomy" id="71421"/>
    <lineage>
        <taxon>Bacteria</taxon>
        <taxon>Pseudomonadati</taxon>
        <taxon>Pseudomonadota</taxon>
        <taxon>Gammaproteobacteria</taxon>
        <taxon>Pasteurellales</taxon>
        <taxon>Pasteurellaceae</taxon>
        <taxon>Haemophilus</taxon>
    </lineage>
</organism>
<dbReference type="EC" id="6.2.1.22"/>
<dbReference type="EMBL" id="L42023">
    <property type="protein sequence ID" value="AAC21703.1"/>
    <property type="molecule type" value="Genomic_DNA"/>
</dbReference>
<dbReference type="PIR" id="F64043">
    <property type="entry name" value="F64043"/>
</dbReference>
<dbReference type="RefSeq" id="NP_438198.1">
    <property type="nucleotide sequence ID" value="NC_000907.1"/>
</dbReference>
<dbReference type="SMR" id="P44462"/>
<dbReference type="STRING" id="71421.HI_0025"/>
<dbReference type="DNASU" id="950918"/>
<dbReference type="EnsemblBacteria" id="AAC21703">
    <property type="protein sequence ID" value="AAC21703"/>
    <property type="gene ID" value="HI_0025"/>
</dbReference>
<dbReference type="KEGG" id="hin:HI_0025"/>
<dbReference type="PATRIC" id="fig|71421.8.peg.25"/>
<dbReference type="eggNOG" id="COG3053">
    <property type="taxonomic scope" value="Bacteria"/>
</dbReference>
<dbReference type="HOGENOM" id="CLU_063190_0_0_6"/>
<dbReference type="OrthoDB" id="9779753at2"/>
<dbReference type="PhylomeDB" id="P44462"/>
<dbReference type="BioCyc" id="HINF71421:G1GJ1-25-MONOMER"/>
<dbReference type="Proteomes" id="UP000000579">
    <property type="component" value="Chromosome"/>
</dbReference>
<dbReference type="GO" id="GO:0008771">
    <property type="term" value="F:[citrate (pro-3S)-lyase] ligase activity"/>
    <property type="evidence" value="ECO:0000318"/>
    <property type="project" value="GO_Central"/>
</dbReference>
<dbReference type="GO" id="GO:0016747">
    <property type="term" value="F:acyltransferase activity, transferring groups other than amino-acyl groups"/>
    <property type="evidence" value="ECO:0007669"/>
    <property type="project" value="InterPro"/>
</dbReference>
<dbReference type="GO" id="GO:0005524">
    <property type="term" value="F:ATP binding"/>
    <property type="evidence" value="ECO:0007669"/>
    <property type="project" value="UniProtKB-KW"/>
</dbReference>
<dbReference type="GO" id="GO:0009058">
    <property type="term" value="P:biosynthetic process"/>
    <property type="evidence" value="ECO:0007669"/>
    <property type="project" value="InterPro"/>
</dbReference>
<dbReference type="CDD" id="cd02169">
    <property type="entry name" value="Citrate_lyase_ligase"/>
    <property type="match status" value="1"/>
</dbReference>
<dbReference type="FunFam" id="3.40.50.620:FF:000071">
    <property type="entry name" value="[Citrate [pro-3S]-lyase] ligase"/>
    <property type="match status" value="1"/>
</dbReference>
<dbReference type="FunFam" id="3.40.630.30:FF:000024">
    <property type="entry name" value="[Citrate [pro-3S]-lyase] ligase"/>
    <property type="match status" value="1"/>
</dbReference>
<dbReference type="Gene3D" id="3.40.630.30">
    <property type="match status" value="1"/>
</dbReference>
<dbReference type="Gene3D" id="3.40.50.620">
    <property type="entry name" value="HUPs"/>
    <property type="match status" value="1"/>
</dbReference>
<dbReference type="InterPro" id="IPR016181">
    <property type="entry name" value="Acyl_CoA_acyltransferase"/>
</dbReference>
<dbReference type="InterPro" id="IPR005216">
    <property type="entry name" value="Citrate_lyase_ligase"/>
</dbReference>
<dbReference type="InterPro" id="IPR013166">
    <property type="entry name" value="Citrate_lyase_ligase_C"/>
</dbReference>
<dbReference type="InterPro" id="IPR004821">
    <property type="entry name" value="Cyt_trans-like"/>
</dbReference>
<dbReference type="InterPro" id="IPR000182">
    <property type="entry name" value="GNAT_dom"/>
</dbReference>
<dbReference type="InterPro" id="IPR014729">
    <property type="entry name" value="Rossmann-like_a/b/a_fold"/>
</dbReference>
<dbReference type="NCBIfam" id="TIGR00124">
    <property type="entry name" value="cit_ly_ligase"/>
    <property type="match status" value="1"/>
</dbReference>
<dbReference type="NCBIfam" id="TIGR00125">
    <property type="entry name" value="cyt_tran_rel"/>
    <property type="match status" value="1"/>
</dbReference>
<dbReference type="PANTHER" id="PTHR40599">
    <property type="entry name" value="[CITRATE [PRO-3S]-LYASE] LIGASE"/>
    <property type="match status" value="1"/>
</dbReference>
<dbReference type="PANTHER" id="PTHR40599:SF2">
    <property type="entry name" value="[CITRATE [PRO-3S]-LYASE] LIGASE"/>
    <property type="match status" value="1"/>
</dbReference>
<dbReference type="Pfam" id="PF08218">
    <property type="entry name" value="Citrate_ly_lig"/>
    <property type="match status" value="1"/>
</dbReference>
<dbReference type="PIRSF" id="PIRSF005751">
    <property type="entry name" value="Acet_citr_lig"/>
    <property type="match status" value="1"/>
</dbReference>
<dbReference type="SMART" id="SM00764">
    <property type="entry name" value="Citrate_ly_lig"/>
    <property type="match status" value="1"/>
</dbReference>
<dbReference type="SUPFAM" id="SSF55729">
    <property type="entry name" value="Acyl-CoA N-acyltransferases (Nat)"/>
    <property type="match status" value="1"/>
</dbReference>
<dbReference type="SUPFAM" id="SSF52374">
    <property type="entry name" value="Nucleotidylyl transferase"/>
    <property type="match status" value="1"/>
</dbReference>
<dbReference type="PROSITE" id="PS51186">
    <property type="entry name" value="GNAT"/>
    <property type="match status" value="1"/>
</dbReference>